<sequence>MNLPPLTPATLIRRYKRFLADCALASGEIITVHCPNSGSMRSCAEPGQPILISQSGNPKRKLPWTWELYWSGASWVCINTQHPNAVVAEAIAAGDIPALQNYAQLRREVPYGSHERVDVLLSSEGRPPCYVEVKSCTLLEEDGVIRFPDAVSSRALRHLGALTEVVRGGGRAVMLFLIGREDGRGFAPADAIDPAYGKALRRARTDGVEILAYRTRLSPDKISLSVAEPLLF</sequence>
<reference key="1">
    <citation type="submission" date="2008-08" db="EMBL/GenBank/DDBJ databases">
        <title>Complete sequence of Acidithiobacillus ferrooxidans ATCC 53993.</title>
        <authorList>
            <person name="Lucas S."/>
            <person name="Copeland A."/>
            <person name="Lapidus A."/>
            <person name="Glavina del Rio T."/>
            <person name="Dalin E."/>
            <person name="Tice H."/>
            <person name="Bruce D."/>
            <person name="Goodwin L."/>
            <person name="Pitluck S."/>
            <person name="Sims D."/>
            <person name="Brettin T."/>
            <person name="Detter J.C."/>
            <person name="Han C."/>
            <person name="Kuske C.R."/>
            <person name="Larimer F."/>
            <person name="Land M."/>
            <person name="Hauser L."/>
            <person name="Kyrpides N."/>
            <person name="Lykidis A."/>
            <person name="Borole A.P."/>
        </authorList>
    </citation>
    <scope>NUCLEOTIDE SEQUENCE [LARGE SCALE GENOMIC DNA]</scope>
    <source>
        <strain>ATCC 53993 / BNL-5-31</strain>
    </source>
</reference>
<accession>B5EQ42</accession>
<gene>
    <name evidence="1" type="primary">sfsA</name>
    <name type="ordered locus">Lferr_1045</name>
</gene>
<name>SFSA_ACIF5</name>
<evidence type="ECO:0000255" key="1">
    <source>
        <dbReference type="HAMAP-Rule" id="MF_00095"/>
    </source>
</evidence>
<proteinExistence type="inferred from homology"/>
<organism>
    <name type="scientific">Acidithiobacillus ferrooxidans (strain ATCC 53993 / BNL-5-31)</name>
    <name type="common">Leptospirillum ferrooxidans (ATCC 53993)</name>
    <dbReference type="NCBI Taxonomy" id="380394"/>
    <lineage>
        <taxon>Bacteria</taxon>
        <taxon>Pseudomonadati</taxon>
        <taxon>Pseudomonadota</taxon>
        <taxon>Acidithiobacillia</taxon>
        <taxon>Acidithiobacillales</taxon>
        <taxon>Acidithiobacillaceae</taxon>
        <taxon>Acidithiobacillus</taxon>
    </lineage>
</organism>
<dbReference type="EMBL" id="CP001132">
    <property type="protein sequence ID" value="ACH83287.1"/>
    <property type="molecule type" value="Genomic_DNA"/>
</dbReference>
<dbReference type="RefSeq" id="WP_012536441.1">
    <property type="nucleotide sequence ID" value="NC_011206.1"/>
</dbReference>
<dbReference type="SMR" id="B5EQ42"/>
<dbReference type="GeneID" id="65280248"/>
<dbReference type="KEGG" id="afe:Lferr_1045"/>
<dbReference type="eggNOG" id="COG1489">
    <property type="taxonomic scope" value="Bacteria"/>
</dbReference>
<dbReference type="HOGENOM" id="CLU_052299_2_0_6"/>
<dbReference type="GO" id="GO:0003677">
    <property type="term" value="F:DNA binding"/>
    <property type="evidence" value="ECO:0007669"/>
    <property type="project" value="InterPro"/>
</dbReference>
<dbReference type="CDD" id="cd22359">
    <property type="entry name" value="SfsA-like_bacterial"/>
    <property type="match status" value="1"/>
</dbReference>
<dbReference type="Gene3D" id="2.40.50.580">
    <property type="match status" value="1"/>
</dbReference>
<dbReference type="Gene3D" id="3.40.1350.60">
    <property type="match status" value="1"/>
</dbReference>
<dbReference type="HAMAP" id="MF_00095">
    <property type="entry name" value="SfsA"/>
    <property type="match status" value="1"/>
</dbReference>
<dbReference type="InterPro" id="IPR005224">
    <property type="entry name" value="SfsA"/>
</dbReference>
<dbReference type="InterPro" id="IPR040452">
    <property type="entry name" value="SfsA_C"/>
</dbReference>
<dbReference type="InterPro" id="IPR041465">
    <property type="entry name" value="SfsA_N"/>
</dbReference>
<dbReference type="NCBIfam" id="TIGR00230">
    <property type="entry name" value="sfsA"/>
    <property type="match status" value="1"/>
</dbReference>
<dbReference type="PANTHER" id="PTHR30545">
    <property type="entry name" value="SUGAR FERMENTATION STIMULATION PROTEIN A"/>
    <property type="match status" value="1"/>
</dbReference>
<dbReference type="PANTHER" id="PTHR30545:SF2">
    <property type="entry name" value="SUGAR FERMENTATION STIMULATION PROTEIN A"/>
    <property type="match status" value="1"/>
</dbReference>
<dbReference type="Pfam" id="PF03749">
    <property type="entry name" value="SfsA"/>
    <property type="match status" value="1"/>
</dbReference>
<dbReference type="Pfam" id="PF17746">
    <property type="entry name" value="SfsA_N"/>
    <property type="match status" value="1"/>
</dbReference>
<feature type="chain" id="PRO_1000093562" description="Sugar fermentation stimulation protein homolog">
    <location>
        <begin position="1"/>
        <end position="232"/>
    </location>
</feature>
<protein>
    <recommendedName>
        <fullName evidence="1">Sugar fermentation stimulation protein homolog</fullName>
    </recommendedName>
</protein>
<comment type="similarity">
    <text evidence="1">Belongs to the SfsA family.</text>
</comment>